<evidence type="ECO:0000255" key="1">
    <source>
        <dbReference type="HAMAP-Rule" id="MF_01390"/>
    </source>
</evidence>
<gene>
    <name evidence="1" type="primary">matK</name>
</gene>
<protein>
    <recommendedName>
        <fullName evidence="1">Maturase K</fullName>
    </recommendedName>
    <alternativeName>
        <fullName evidence="1">Intron maturase</fullName>
    </alternativeName>
</protein>
<feature type="chain" id="PRO_0000355933" description="Maturase K">
    <location>
        <begin position="1"/>
        <end position="509"/>
    </location>
</feature>
<proteinExistence type="inferred from homology"/>
<name>MATK_DRIGR</name>
<comment type="function">
    <text evidence="1">Usually encoded in the trnK tRNA gene intron. Probably assists in splicing its own and other chloroplast group II introns.</text>
</comment>
<comment type="subcellular location">
    <subcellularLocation>
        <location>Plastid</location>
        <location>Chloroplast</location>
    </subcellularLocation>
</comment>
<comment type="similarity">
    <text evidence="1">Belongs to the intron maturase 2 family. MatK subfamily.</text>
</comment>
<sequence length="509" mass="60343">MEELQGYLEIDGSRQQCFLYPLFFQEYIYALAHDHGLNGSILYKPMEIFGYDNKFSSLIGKRLITRMHQQNHLILSVKDSKQNLFVVPNKYFDSQMMSEVFAVIVEIPFSLRLVSSLEEKKIAKSHIRSIQSIHSIFLFFEDKFSHLNHVSDILIPHPIHLEILVQTLRCWIQDAPSLHLLRFFLYESRNSNSLIIPKKSISFFSKRNQRFFLFLYNSHIYGCESIFVFLRKQSSHLRSTSSRTLLERTHLYGKIEHFLVVLRNDFQRTLWLFKDPFMHYVRYQGKAIMASKGTHFLMKKWKYHLVNLWQCHFYLWSQPDSIHINQLYNHSFYFLGYLSRVQLNPSVVRSQMLENLFIIDTAINKFETIVPMIPLIRSLAKAKFCNVSGHPISKPARADSSDSDIIDRFGRICRNLFHYHSGSLKKQSLYRIKYILRLSCARTLARKHKSKVRAFLKRLGSGFFQEFLTEEEQVLSLIFPRTYSTSHRSHSERIWYLDIIRINDLANHE</sequence>
<keyword id="KW-0150">Chloroplast</keyword>
<keyword id="KW-0507">mRNA processing</keyword>
<keyword id="KW-0934">Plastid</keyword>
<keyword id="KW-0694">RNA-binding</keyword>
<keyword id="KW-0819">tRNA processing</keyword>
<reference key="1">
    <citation type="journal article" date="2006" name="BMC Evol. Biol.">
        <title>Complete plastid genome sequences of Drimys, Liriodendron, and Piper: implications for the phylogenetic relationships of magnoliids.</title>
        <authorList>
            <person name="Cai Z."/>
            <person name="Penaflor C."/>
            <person name="Kuehl J.V."/>
            <person name="Leebens-Mack J."/>
            <person name="Carlson J.E."/>
            <person name="dePamphilis C.W."/>
            <person name="Boore J.L."/>
            <person name="Jansen R.K."/>
        </authorList>
    </citation>
    <scope>NUCLEOTIDE SEQUENCE [LARGE SCALE GENOMIC DNA]</scope>
</reference>
<dbReference type="EMBL" id="DQ887676">
    <property type="protein sequence ID" value="ABH88278.1"/>
    <property type="molecule type" value="Genomic_DNA"/>
</dbReference>
<dbReference type="RefSeq" id="YP_784367.1">
    <property type="nucleotide sequence ID" value="NC_008456.1"/>
</dbReference>
<dbReference type="GeneID" id="4363639"/>
<dbReference type="GO" id="GO:0009507">
    <property type="term" value="C:chloroplast"/>
    <property type="evidence" value="ECO:0007669"/>
    <property type="project" value="UniProtKB-SubCell"/>
</dbReference>
<dbReference type="GO" id="GO:0003723">
    <property type="term" value="F:RNA binding"/>
    <property type="evidence" value="ECO:0007669"/>
    <property type="project" value="UniProtKB-KW"/>
</dbReference>
<dbReference type="GO" id="GO:0006397">
    <property type="term" value="P:mRNA processing"/>
    <property type="evidence" value="ECO:0007669"/>
    <property type="project" value="UniProtKB-KW"/>
</dbReference>
<dbReference type="GO" id="GO:0008380">
    <property type="term" value="P:RNA splicing"/>
    <property type="evidence" value="ECO:0007669"/>
    <property type="project" value="UniProtKB-UniRule"/>
</dbReference>
<dbReference type="GO" id="GO:0008033">
    <property type="term" value="P:tRNA processing"/>
    <property type="evidence" value="ECO:0007669"/>
    <property type="project" value="UniProtKB-KW"/>
</dbReference>
<dbReference type="HAMAP" id="MF_01390">
    <property type="entry name" value="MatK"/>
    <property type="match status" value="1"/>
</dbReference>
<dbReference type="InterPro" id="IPR024937">
    <property type="entry name" value="Domain_X"/>
</dbReference>
<dbReference type="InterPro" id="IPR002866">
    <property type="entry name" value="Maturase_MatK"/>
</dbReference>
<dbReference type="InterPro" id="IPR024942">
    <property type="entry name" value="Maturase_MatK_N"/>
</dbReference>
<dbReference type="PANTHER" id="PTHR34811">
    <property type="entry name" value="MATURASE K"/>
    <property type="match status" value="1"/>
</dbReference>
<dbReference type="PANTHER" id="PTHR34811:SF1">
    <property type="entry name" value="MATURASE K"/>
    <property type="match status" value="1"/>
</dbReference>
<dbReference type="Pfam" id="PF01348">
    <property type="entry name" value="Intron_maturas2"/>
    <property type="match status" value="1"/>
</dbReference>
<dbReference type="Pfam" id="PF01824">
    <property type="entry name" value="MatK_N"/>
    <property type="match status" value="1"/>
</dbReference>
<geneLocation type="chloroplast"/>
<accession>Q06H16</accession>
<organism>
    <name type="scientific">Drimys granadensis</name>
    <dbReference type="NCBI Taxonomy" id="224735"/>
    <lineage>
        <taxon>Eukaryota</taxon>
        <taxon>Viridiplantae</taxon>
        <taxon>Streptophyta</taxon>
        <taxon>Embryophyta</taxon>
        <taxon>Tracheophyta</taxon>
        <taxon>Spermatophyta</taxon>
        <taxon>Magnoliopsida</taxon>
        <taxon>Magnoliidae</taxon>
        <taxon>Canellales</taxon>
        <taxon>Winteraceae</taxon>
        <taxon>Drimys</taxon>
    </lineage>
</organism>